<keyword id="KW-0678">Repressor</keyword>
<keyword id="KW-0346">Stress response</keyword>
<keyword id="KW-0804">Transcription</keyword>
<keyword id="KW-0805">Transcription regulation</keyword>
<protein>
    <recommendedName>
        <fullName evidence="1">Heat-inducible transcription repressor HrcA</fullName>
    </recommendedName>
</protein>
<sequence length="349" mass="38645">MCASFSPTLDSRSRQLLRTLISCYIQNGEPIGSKTLAQQAGLDISPATIRNILADLEELGLLNSPHTSAGRVPTAHGYRMFVDSLVQMQPPSEDDIRRLRVEMTGGGTQTLLGSASEILSAMTHFVGVVSAPRREQFVFRHIDFVPLDARQIMAILIFADNEVQNRVIEPRRVYEPGELERVSNYLNAHFIGRTLADIRTTVLCELRKAKDEMEQLLAHSLDLASQMLVPNDSEDIVVTGQTRLMALQDLSDMDRLRELFEIFASKREILQLLERTIDAPGVRIFIGEETGMVSMEDISLVTAPYAAHGQVLGVLGVIGPKRMAYDRVIPLVQVVAQVLGTALEPPTMP</sequence>
<organism>
    <name type="scientific">Xylella fastidiosa (strain M23)</name>
    <dbReference type="NCBI Taxonomy" id="405441"/>
    <lineage>
        <taxon>Bacteria</taxon>
        <taxon>Pseudomonadati</taxon>
        <taxon>Pseudomonadota</taxon>
        <taxon>Gammaproteobacteria</taxon>
        <taxon>Lysobacterales</taxon>
        <taxon>Lysobacteraceae</taxon>
        <taxon>Xylella</taxon>
    </lineage>
</organism>
<reference key="1">
    <citation type="journal article" date="2010" name="J. Bacteriol.">
        <title>Whole genome sequences of two Xylella fastidiosa strains (M12 and M23) causing almond leaf scorch disease in California.</title>
        <authorList>
            <person name="Chen J."/>
            <person name="Xie G."/>
            <person name="Han S."/>
            <person name="Chertkov O."/>
            <person name="Sims D."/>
            <person name="Civerolo E.L."/>
        </authorList>
    </citation>
    <scope>NUCLEOTIDE SEQUENCE [LARGE SCALE GENOMIC DNA]</scope>
    <source>
        <strain>M23</strain>
    </source>
</reference>
<comment type="function">
    <text evidence="1">Negative regulator of class I heat shock genes (grpE-dnaK-dnaJ and groELS operons). Prevents heat-shock induction of these operons.</text>
</comment>
<comment type="similarity">
    <text evidence="1">Belongs to the HrcA family.</text>
</comment>
<proteinExistence type="inferred from homology"/>
<name>HRCA_XYLF2</name>
<dbReference type="EMBL" id="CP001011">
    <property type="protein sequence ID" value="ACB92868.1"/>
    <property type="molecule type" value="Genomic_DNA"/>
</dbReference>
<dbReference type="RefSeq" id="WP_004091048.1">
    <property type="nucleotide sequence ID" value="NC_010577.1"/>
</dbReference>
<dbReference type="SMR" id="B2I6F8"/>
<dbReference type="GeneID" id="93905189"/>
<dbReference type="KEGG" id="xfn:XfasM23_1457"/>
<dbReference type="HOGENOM" id="CLU_050019_0_0_6"/>
<dbReference type="Proteomes" id="UP000001698">
    <property type="component" value="Chromosome"/>
</dbReference>
<dbReference type="GO" id="GO:0003677">
    <property type="term" value="F:DNA binding"/>
    <property type="evidence" value="ECO:0007669"/>
    <property type="project" value="InterPro"/>
</dbReference>
<dbReference type="GO" id="GO:0045892">
    <property type="term" value="P:negative regulation of DNA-templated transcription"/>
    <property type="evidence" value="ECO:0007669"/>
    <property type="project" value="UniProtKB-UniRule"/>
</dbReference>
<dbReference type="Gene3D" id="3.30.450.40">
    <property type="match status" value="1"/>
</dbReference>
<dbReference type="Gene3D" id="3.30.390.60">
    <property type="entry name" value="Heat-inducible transcription repressor hrca homolog, domain 3"/>
    <property type="match status" value="1"/>
</dbReference>
<dbReference type="Gene3D" id="1.10.10.10">
    <property type="entry name" value="Winged helix-like DNA-binding domain superfamily/Winged helix DNA-binding domain"/>
    <property type="match status" value="1"/>
</dbReference>
<dbReference type="HAMAP" id="MF_00081">
    <property type="entry name" value="HrcA"/>
    <property type="match status" value="1"/>
</dbReference>
<dbReference type="InterPro" id="IPR029016">
    <property type="entry name" value="GAF-like_dom_sf"/>
</dbReference>
<dbReference type="InterPro" id="IPR002571">
    <property type="entry name" value="HrcA"/>
</dbReference>
<dbReference type="InterPro" id="IPR021153">
    <property type="entry name" value="HrcA_C"/>
</dbReference>
<dbReference type="InterPro" id="IPR036388">
    <property type="entry name" value="WH-like_DNA-bd_sf"/>
</dbReference>
<dbReference type="InterPro" id="IPR036390">
    <property type="entry name" value="WH_DNA-bd_sf"/>
</dbReference>
<dbReference type="InterPro" id="IPR005104">
    <property type="entry name" value="WHTH_HrcA_DNA-bd"/>
</dbReference>
<dbReference type="InterPro" id="IPR023120">
    <property type="entry name" value="WHTH_transcript_rep_HrcA_IDD"/>
</dbReference>
<dbReference type="NCBIfam" id="TIGR00331">
    <property type="entry name" value="hrcA"/>
    <property type="match status" value="1"/>
</dbReference>
<dbReference type="PANTHER" id="PTHR34824">
    <property type="entry name" value="HEAT-INDUCIBLE TRANSCRIPTION REPRESSOR HRCA"/>
    <property type="match status" value="1"/>
</dbReference>
<dbReference type="PANTHER" id="PTHR34824:SF1">
    <property type="entry name" value="HEAT-INDUCIBLE TRANSCRIPTION REPRESSOR HRCA"/>
    <property type="match status" value="1"/>
</dbReference>
<dbReference type="Pfam" id="PF01628">
    <property type="entry name" value="HrcA"/>
    <property type="match status" value="1"/>
</dbReference>
<dbReference type="Pfam" id="PF03444">
    <property type="entry name" value="HrcA_DNA-bdg"/>
    <property type="match status" value="1"/>
</dbReference>
<dbReference type="PIRSF" id="PIRSF005485">
    <property type="entry name" value="HrcA"/>
    <property type="match status" value="1"/>
</dbReference>
<dbReference type="SUPFAM" id="SSF55781">
    <property type="entry name" value="GAF domain-like"/>
    <property type="match status" value="1"/>
</dbReference>
<dbReference type="SUPFAM" id="SSF46785">
    <property type="entry name" value="Winged helix' DNA-binding domain"/>
    <property type="match status" value="1"/>
</dbReference>
<evidence type="ECO:0000255" key="1">
    <source>
        <dbReference type="HAMAP-Rule" id="MF_00081"/>
    </source>
</evidence>
<accession>B2I6F8</accession>
<feature type="chain" id="PRO_1000092839" description="Heat-inducible transcription repressor HrcA">
    <location>
        <begin position="1"/>
        <end position="349"/>
    </location>
</feature>
<gene>
    <name evidence="1" type="primary">hrcA</name>
    <name type="ordered locus">XfasM23_1457</name>
</gene>